<proteinExistence type="evidence at protein level"/>
<dbReference type="EMBL" id="U20503">
    <property type="protein sequence ID" value="AAC43470.1"/>
    <property type="molecule type" value="Genomic_DNA"/>
</dbReference>
<dbReference type="SMR" id="Q53599"/>
<dbReference type="MEROPS" id="I96.001"/>
<dbReference type="Gene3D" id="3.10.20.120">
    <property type="match status" value="6"/>
</dbReference>
<dbReference type="InterPro" id="IPR005298">
    <property type="entry name" value="MAP_dom"/>
</dbReference>
<dbReference type="Pfam" id="PF03642">
    <property type="entry name" value="MAP"/>
    <property type="match status" value="6"/>
</dbReference>
<dbReference type="PROSITE" id="PS51223">
    <property type="entry name" value="MAP"/>
    <property type="match status" value="6"/>
</dbReference>
<keyword id="KW-0903">Direct protein sequencing</keyword>
<keyword id="KW-0677">Repeat</keyword>
<keyword id="KW-0732">Signal</keyword>
<reference key="1">
    <citation type="journal article" date="1995" name="J. Biol. Chem.">
        <title>Staphylococcus aureus expresses a major histocompatibility complex class II analog.</title>
        <authorList>
            <person name="Joensson K."/>
            <person name="McDevitt D."/>
            <person name="McGavin M.H."/>
            <person name="Patti J.M."/>
            <person name="Hoeoek M."/>
        </authorList>
    </citation>
    <scope>NUCLEOTIDE SEQUENCE [GENOMIC DNA]</scope>
    <scope>PROTEIN SEQUENCE OF 31-40</scope>
    <source>
        <strain>FDA 574</strain>
    </source>
</reference>
<reference key="2">
    <citation type="journal article" date="2002" name="J. Clin. Invest.">
        <title>The Staphylococcus aureus Map protein is an immunomodulator that interferes with T cell-mediated responses.</title>
        <authorList>
            <person name="Lee L.Y."/>
            <person name="Miyamoto Y.J."/>
            <person name="McIntyre B.W."/>
            <person name="Hook M."/>
            <person name="McCrea K.W."/>
            <person name="McDevitt D."/>
            <person name="Brown E.L."/>
        </authorList>
    </citation>
    <scope>FUNCTION</scope>
</reference>
<organism>
    <name type="scientific">Staphylococcus aureus</name>
    <dbReference type="NCBI Taxonomy" id="1280"/>
    <lineage>
        <taxon>Bacteria</taxon>
        <taxon>Bacillati</taxon>
        <taxon>Bacillota</taxon>
        <taxon>Bacilli</taxon>
        <taxon>Bacillales</taxon>
        <taxon>Staphylococcaceae</taxon>
        <taxon>Staphylococcus</taxon>
    </lineage>
</organism>
<sequence>MKFKSLITTTLALGVIASTGANLDTNEASAAAKQIDKSSSSLHHGYSKIQIPYTITVNGTSQNILSSLTFNKNQQISYKDIENKVKSVLYFNRGISDIDLRLSKQAKYTVHFKNGTKRVVDLKAGIHTADLINTSDIKAISVNVDTKKQVKDKEAKANVQVPYTITVNGTSQNILSNLTFKKNQQISYKDLENNVKSVLKSNRGITDVDLRLSKQAKFTVNFKNGTKKVIDLKAGIYTANLINTGGIKNININVETKKQAKDKEAKVNNQVPYSINLNGTTTNIQSNLAFSNKPWTNYKNLTTKVKSVLKSDRGVSERDLKHAKKAYYTVYFKNGGKRVIHLNSNIYTANLVHAKDVKRIEVTVKTVSKVKAERYVPYTIAVNGASNPTLSDLKFTGDSRVSYSDIKKKVKSVLKHDRGIGERELKYAEKATYTVHFKNGTKKVINLNSNISQLNLLYVKDIKNIDIDVKTGAKAKVYSYVPYTIAVNGTTTPIASKLKLSNKQLIGYQDLNKKVKSVLKHDRGINDIELKFAKQAKYTIHFKNGKTQVVDLKSDIFTRNLFSVKDIKKIDINVKQQSKSNKALNKVTNKATKVKFPVTINGFSNLVSNEFAFLHPHKITTNDLNAKLRLALRSDQGITKHDIGLSERTVYKVYFKDGSSKLEDLKAAKQDSKVFKATDIKKVDIEIKF</sequence>
<evidence type="ECO:0000269" key="1">
    <source>
    </source>
</evidence>
<evidence type="ECO:0000269" key="2">
    <source>
    </source>
</evidence>
<name>MAP_STAAU</name>
<feature type="signal peptide" evidence="2">
    <location>
        <begin position="1"/>
        <end position="30"/>
    </location>
</feature>
<feature type="chain" id="PRO_0000021641" description="Protein map">
    <location>
        <begin position="31"/>
        <end position="689"/>
    </location>
</feature>
<feature type="repeat" description="MAP 1">
    <location>
        <begin position="45"/>
        <end position="154"/>
    </location>
</feature>
<feature type="repeat" description="MAP 2">
    <location>
        <begin position="155"/>
        <end position="264"/>
    </location>
</feature>
<feature type="repeat" description="MAP 3">
    <location>
        <begin position="265"/>
        <end position="374"/>
    </location>
</feature>
<feature type="repeat" description="MAP 4">
    <location>
        <begin position="375"/>
        <end position="474"/>
    </location>
</feature>
<feature type="repeat" description="MAP 5">
    <location>
        <begin position="475"/>
        <end position="584"/>
    </location>
</feature>
<feature type="repeat" description="MAP 6">
    <location>
        <begin position="589"/>
        <end position="689"/>
    </location>
</feature>
<protein>
    <recommendedName>
        <fullName>Protein map</fullName>
    </recommendedName>
    <alternativeName>
        <fullName>MHC class II analog protein</fullName>
    </alternativeName>
</protein>
<comment type="function">
    <text evidence="1">Both native and recombinant protein bound to labeled vitronectin, fibrinogen, recombinant osteopontin and fibronectin. It was also shown to be able to bind to a 15-amino acid synthetic peptide of vitronectin. Map could affect the severity of arthritis and osteomyelitis in mice through a T-cell-mediated mechanism and could play a role in abscess formation through a T-cell-independent mechanisms. It could potentiate the survival of the bacterium by modulating host immunity.</text>
</comment>
<comment type="domain">
    <text>Each MAP domain contains a 31-residue subdomain that shares striking sequence homology with a segment present in the peptide binding groove of the beta chain of the MHC class II proteins from different mammalian species.</text>
</comment>
<accession>Q53599</accession>
<gene>
    <name type="primary">map</name>
</gene>